<protein>
    <recommendedName>
        <fullName evidence="5">DNA-binding protein HMf-1</fullName>
    </recommendedName>
    <alternativeName>
        <fullName>Archaeal histone A</fullName>
    </alternativeName>
</protein>
<accession>P48781</accession>
<name>HMFA_METFE</name>
<keyword id="KW-0002">3D-structure</keyword>
<keyword id="KW-0158">Chromosome</keyword>
<keyword id="KW-0963">Cytoplasm</keyword>
<keyword id="KW-0903">Direct protein sequencing</keyword>
<keyword id="KW-0238">DNA-binding</keyword>
<sequence length="69" mass="7500">MGELPIAPIGRIIKNAGAERVSDDARIALAKVLEEMGEEIASEAVKLAKHAGRKTIKAEDIELARKMFK</sequence>
<organism>
    <name type="scientific">Methanothermus fervidus</name>
    <dbReference type="NCBI Taxonomy" id="2180"/>
    <lineage>
        <taxon>Archaea</taxon>
        <taxon>Methanobacteriati</taxon>
        <taxon>Methanobacteriota</taxon>
        <taxon>Methanomada group</taxon>
        <taxon>Methanobacteria</taxon>
        <taxon>Methanobacteriales</taxon>
        <taxon>Methanothermaceae</taxon>
        <taxon>Methanothermus</taxon>
    </lineage>
</organism>
<proteinExistence type="evidence at protein level"/>
<comment type="function">
    <text evidence="3 4">Binds and compacts DNA (95 to 150 base pairs) to form nucleosome-like structures that contain positive DNA supercoils. Increases the resistance of DNA to thermal denaturation.</text>
</comment>
<comment type="subunit">
    <text evidence="1 2 3 4">Homodimer and heterodimer of HmfA and HmfB (PubMed:11021968, PubMed:2377617, PubMed:7809089). Forms primarily homodimers during exponential phase, and heterodimers appear when cells enter stationary phase (PubMed:7809089). Dimers then assemble into higher oligomers, with the DNA wrapped around the protein core (By similarity).</text>
</comment>
<comment type="subcellular location">
    <subcellularLocation>
        <location evidence="8">Cytoplasm</location>
    </subcellularLocation>
    <subcellularLocation>
        <location evidence="8 9">Chromosome</location>
    </subcellularLocation>
</comment>
<comment type="induction">
    <text evidence="4">Expressed at constant, high levels during exponential growth and during stationary phase.</text>
</comment>
<comment type="similarity">
    <text evidence="7">Belongs to the archaeal histone HMF family.</text>
</comment>
<reference key="1">
    <citation type="journal article" date="1992" name="J. Bacteriol.">
        <title>HMt, a histone-related protein from Methanobacterium thermoautotrophicum delta H.</title>
        <authorList>
            <person name="Tabassum R."/>
            <person name="Sandman K.M."/>
            <person name="Reeve J.N."/>
        </authorList>
    </citation>
    <scope>NUCLEOTIDE SEQUENCE [GENOMIC DNA]</scope>
    <scope>PROTEIN SEQUENCE OF 1-67</scope>
</reference>
<reference key="2">
    <citation type="journal article" date="1990" name="Proc. Natl. Acad. Sci. U.S.A.">
        <title>HMf, a DNA-binding protein isolated from the hyperthermophilic archaeon Methanothermus fervidus, is most closely related to histones.</title>
        <authorList>
            <person name="Sandman K.M."/>
            <person name="Krzycki J.A."/>
            <person name="Dobrinski B."/>
            <person name="Lurz R."/>
            <person name="Reeve J.N."/>
        </authorList>
    </citation>
    <scope>PROTEIN SEQUENCE OF 1-35</scope>
    <scope>FUNCTION</scope>
    <scope>SUBCELLULAR LOCATION</scope>
    <scope>SUBUNIT</scope>
</reference>
<reference key="3">
    <citation type="journal article" date="1994" name="Proc. Natl. Acad. Sci. U.S.A.">
        <title>Growth-phase-dependent synthesis of histones in the archaeon Methanothermus fervidus.</title>
        <authorList>
            <person name="Sandman K.M."/>
            <person name="Grayling R.A."/>
            <person name="Dobrinski B."/>
            <person name="Lurz R."/>
            <person name="Reeve J.N."/>
        </authorList>
    </citation>
    <scope>FUNCTION</scope>
    <scope>SUBUNIT</scope>
    <scope>SUBCELLULAR LOCATION</scope>
    <scope>INDUCTION</scope>
</reference>
<reference key="4">
    <citation type="journal article" date="1996" name="Proteins">
        <title>Crystallization and preliminary X-ray characterization of the Methanothermus fervidus histones HMfA and HMfB.</title>
        <authorList>
            <person name="Decanniere K."/>
            <person name="Sandman K."/>
            <person name="Reeve J.N."/>
            <person name="Heinemann U."/>
        </authorList>
    </citation>
    <scope>CRYSTALLIZATION</scope>
</reference>
<reference key="5">
    <citation type="journal article" date="2000" name="J. Mol. Biol.">
        <title>Crystal structures of recombinant histones HMfA and HMfB from the hyperthermophilic archaeon Methanothermus fervidus.</title>
        <authorList>
            <person name="Decanniere K."/>
            <person name="Babu A.M."/>
            <person name="Sandman K."/>
            <person name="Reeve J.N."/>
            <person name="Heinemann U."/>
        </authorList>
    </citation>
    <scope>X-RAY CRYSTALLOGRAPHY (1.48 ANGSTROMS)</scope>
    <scope>SUBUNIT</scope>
</reference>
<dbReference type="EMBL" id="M96826">
    <property type="protein sequence ID" value="AAA73366.1"/>
    <property type="molecule type" value="Genomic_DNA"/>
</dbReference>
<dbReference type="PIR" id="A47036">
    <property type="entry name" value="A47036"/>
</dbReference>
<dbReference type="PIR" id="T48848">
    <property type="entry name" value="T48848"/>
</dbReference>
<dbReference type="RefSeq" id="WP_013413995.1">
    <property type="nucleotide sequence ID" value="NC_014658.1"/>
</dbReference>
<dbReference type="PDB" id="1B67">
    <property type="method" value="X-ray"/>
    <property type="resolution" value="1.48 A"/>
    <property type="chains" value="A/B=2-69"/>
</dbReference>
<dbReference type="PDB" id="1HTA">
    <property type="method" value="X-ray"/>
    <property type="resolution" value="1.55 A"/>
    <property type="chains" value="A=1-69"/>
</dbReference>
<dbReference type="PDBsum" id="1B67"/>
<dbReference type="PDBsum" id="1HTA"/>
<dbReference type="SMR" id="P48781"/>
<dbReference type="OMA" id="VEWANHA"/>
<dbReference type="EvolutionaryTrace" id="P48781"/>
<dbReference type="GO" id="GO:0005694">
    <property type="term" value="C:chromosome"/>
    <property type="evidence" value="ECO:0007669"/>
    <property type="project" value="UniProtKB-SubCell"/>
</dbReference>
<dbReference type="GO" id="GO:0005737">
    <property type="term" value="C:cytoplasm"/>
    <property type="evidence" value="ECO:0007669"/>
    <property type="project" value="UniProtKB-SubCell"/>
</dbReference>
<dbReference type="GO" id="GO:0003690">
    <property type="term" value="F:double-stranded DNA binding"/>
    <property type="evidence" value="ECO:0000314"/>
    <property type="project" value="UniProtKB"/>
</dbReference>
<dbReference type="GO" id="GO:0046982">
    <property type="term" value="F:protein heterodimerization activity"/>
    <property type="evidence" value="ECO:0000314"/>
    <property type="project" value="UniProtKB"/>
</dbReference>
<dbReference type="GO" id="GO:0042803">
    <property type="term" value="F:protein homodimerization activity"/>
    <property type="evidence" value="ECO:0000314"/>
    <property type="project" value="UniProtKB"/>
</dbReference>
<dbReference type="GO" id="GO:0006265">
    <property type="term" value="P:DNA topological change"/>
    <property type="evidence" value="ECO:0000314"/>
    <property type="project" value="UniProtKB"/>
</dbReference>
<dbReference type="CDD" id="cd22909">
    <property type="entry name" value="HFD_archaea_histone-like"/>
    <property type="match status" value="1"/>
</dbReference>
<dbReference type="Gene3D" id="1.10.20.10">
    <property type="entry name" value="Histone, subunit A"/>
    <property type="match status" value="1"/>
</dbReference>
<dbReference type="InterPro" id="IPR050947">
    <property type="entry name" value="Archaeal_histone_HMF"/>
</dbReference>
<dbReference type="InterPro" id="IPR003958">
    <property type="entry name" value="CBFA_NFYB_domain"/>
</dbReference>
<dbReference type="InterPro" id="IPR009072">
    <property type="entry name" value="Histone-fold"/>
</dbReference>
<dbReference type="InterPro" id="IPR050004">
    <property type="entry name" value="HmfB-like"/>
</dbReference>
<dbReference type="NCBIfam" id="NF043032">
    <property type="entry name" value="archaea_histone"/>
    <property type="match status" value="1"/>
</dbReference>
<dbReference type="PANTHER" id="PTHR47828">
    <property type="entry name" value="ARCHAEAL HISTONE A"/>
    <property type="match status" value="1"/>
</dbReference>
<dbReference type="PANTHER" id="PTHR47828:SF1">
    <property type="entry name" value="ARCHAEAL HISTONE A"/>
    <property type="match status" value="1"/>
</dbReference>
<dbReference type="Pfam" id="PF00808">
    <property type="entry name" value="CBFD_NFYB_HMF"/>
    <property type="match status" value="1"/>
</dbReference>
<dbReference type="SUPFAM" id="SSF47113">
    <property type="entry name" value="Histone-fold"/>
    <property type="match status" value="1"/>
</dbReference>
<evidence type="ECO:0000250" key="1">
    <source>
        <dbReference type="UniProtKB" id="P19267"/>
    </source>
</evidence>
<evidence type="ECO:0000269" key="2">
    <source>
    </source>
</evidence>
<evidence type="ECO:0000269" key="3">
    <source>
    </source>
</evidence>
<evidence type="ECO:0000269" key="4">
    <source>
    </source>
</evidence>
<evidence type="ECO:0000303" key="5">
    <source>
    </source>
</evidence>
<evidence type="ECO:0000303" key="6">
    <source>
    </source>
</evidence>
<evidence type="ECO:0000305" key="7"/>
<evidence type="ECO:0000305" key="8">
    <source>
    </source>
</evidence>
<evidence type="ECO:0000305" key="9">
    <source>
    </source>
</evidence>
<evidence type="ECO:0007829" key="10">
    <source>
        <dbReference type="PDB" id="1B67"/>
    </source>
</evidence>
<feature type="chain" id="PRO_0000154982" description="DNA-binding protein HMf-1">
    <location>
        <begin position="1"/>
        <end position="69"/>
    </location>
</feature>
<feature type="region of interest" description="Interaction with DNA" evidence="1">
    <location>
        <begin position="20"/>
        <end position="22"/>
    </location>
</feature>
<feature type="region of interest" description="Interaction with DNA" evidence="1">
    <location>
        <begin position="54"/>
        <end position="57"/>
    </location>
</feature>
<feature type="site" description="Interaction with DNA" evidence="1">
    <location>
        <position position="14"/>
    </location>
</feature>
<feature type="helix" evidence="10">
    <location>
        <begin position="6"/>
        <end position="15"/>
    </location>
</feature>
<feature type="strand" evidence="10">
    <location>
        <begin position="19"/>
        <end position="21"/>
    </location>
</feature>
<feature type="helix" evidence="10">
    <location>
        <begin position="23"/>
        <end position="50"/>
    </location>
</feature>
<feature type="strand" evidence="10">
    <location>
        <begin position="54"/>
        <end position="56"/>
    </location>
</feature>
<feature type="helix" evidence="10">
    <location>
        <begin position="58"/>
        <end position="64"/>
    </location>
</feature>
<feature type="helix" evidence="10">
    <location>
        <begin position="65"/>
        <end position="68"/>
    </location>
</feature>
<gene>
    <name evidence="6" type="primary">hmfA</name>
</gene>